<feature type="chain" id="PRO_1000085770" description="HTH-type transcriptional regulator MalT">
    <location>
        <begin position="1"/>
        <end position="901"/>
    </location>
</feature>
<feature type="domain" description="HTH luxR-type" evidence="1">
    <location>
        <begin position="829"/>
        <end position="894"/>
    </location>
</feature>
<feature type="DNA-binding region" description="H-T-H motif" evidence="1">
    <location>
        <begin position="853"/>
        <end position="872"/>
    </location>
</feature>
<feature type="binding site" evidence="1">
    <location>
        <begin position="39"/>
        <end position="46"/>
    </location>
    <ligand>
        <name>ATP</name>
        <dbReference type="ChEBI" id="CHEBI:30616"/>
    </ligand>
</feature>
<organism>
    <name type="scientific">Escherichia coli (strain UTI89 / UPEC)</name>
    <dbReference type="NCBI Taxonomy" id="364106"/>
    <lineage>
        <taxon>Bacteria</taxon>
        <taxon>Pseudomonadati</taxon>
        <taxon>Pseudomonadota</taxon>
        <taxon>Gammaproteobacteria</taxon>
        <taxon>Enterobacterales</taxon>
        <taxon>Enterobacteriaceae</taxon>
        <taxon>Escherichia</taxon>
    </lineage>
</organism>
<keyword id="KW-0010">Activator</keyword>
<keyword id="KW-0067">ATP-binding</keyword>
<keyword id="KW-0119">Carbohydrate metabolism</keyword>
<keyword id="KW-0238">DNA-binding</keyword>
<keyword id="KW-0547">Nucleotide-binding</keyword>
<keyword id="KW-0804">Transcription</keyword>
<keyword id="KW-0805">Transcription regulation</keyword>
<evidence type="ECO:0000255" key="1">
    <source>
        <dbReference type="HAMAP-Rule" id="MF_01247"/>
    </source>
</evidence>
<dbReference type="EMBL" id="CP000243">
    <property type="protein sequence ID" value="ABE09348.1"/>
    <property type="molecule type" value="Genomic_DNA"/>
</dbReference>
<dbReference type="RefSeq" id="WP_000906972.1">
    <property type="nucleotide sequence ID" value="NZ_CP064825.1"/>
</dbReference>
<dbReference type="SMR" id="Q1R5L6"/>
<dbReference type="KEGG" id="eci:UTI89_C3919"/>
<dbReference type="HOGENOM" id="CLU_006325_3_0_6"/>
<dbReference type="Proteomes" id="UP000001952">
    <property type="component" value="Chromosome"/>
</dbReference>
<dbReference type="GO" id="GO:0005524">
    <property type="term" value="F:ATP binding"/>
    <property type="evidence" value="ECO:0007669"/>
    <property type="project" value="UniProtKB-UniRule"/>
</dbReference>
<dbReference type="GO" id="GO:0003677">
    <property type="term" value="F:DNA binding"/>
    <property type="evidence" value="ECO:0007669"/>
    <property type="project" value="UniProtKB-KW"/>
</dbReference>
<dbReference type="GO" id="GO:0003700">
    <property type="term" value="F:DNA-binding transcription factor activity"/>
    <property type="evidence" value="ECO:0007669"/>
    <property type="project" value="UniProtKB-UniRule"/>
</dbReference>
<dbReference type="GO" id="GO:0045913">
    <property type="term" value="P:positive regulation of carbohydrate metabolic process"/>
    <property type="evidence" value="ECO:0007669"/>
    <property type="project" value="UniProtKB-UniRule"/>
</dbReference>
<dbReference type="GO" id="GO:0045893">
    <property type="term" value="P:positive regulation of DNA-templated transcription"/>
    <property type="evidence" value="ECO:0007669"/>
    <property type="project" value="UniProtKB-UniRule"/>
</dbReference>
<dbReference type="CDD" id="cd06170">
    <property type="entry name" value="LuxR_C_like"/>
    <property type="match status" value="1"/>
</dbReference>
<dbReference type="FunFam" id="1.10.10.10:FF:000115">
    <property type="entry name" value="HTH-type transcriptional regulator MalT"/>
    <property type="match status" value="1"/>
</dbReference>
<dbReference type="FunFam" id="1.25.40.10:FF:000086">
    <property type="entry name" value="HTH-type transcriptional regulator MalT"/>
    <property type="match status" value="1"/>
</dbReference>
<dbReference type="Gene3D" id="3.40.50.300">
    <property type="entry name" value="P-loop containing nucleotide triphosphate hydrolases"/>
    <property type="match status" value="1"/>
</dbReference>
<dbReference type="Gene3D" id="1.25.40.10">
    <property type="entry name" value="Tetratricopeptide repeat domain"/>
    <property type="match status" value="1"/>
</dbReference>
<dbReference type="Gene3D" id="1.10.10.10">
    <property type="entry name" value="Winged helix-like DNA-binding domain superfamily/Winged helix DNA-binding domain"/>
    <property type="match status" value="1"/>
</dbReference>
<dbReference type="HAMAP" id="MF_01247">
    <property type="entry name" value="HTH_type_MalT"/>
    <property type="match status" value="1"/>
</dbReference>
<dbReference type="InterPro" id="IPR027417">
    <property type="entry name" value="P-loop_NTPase"/>
</dbReference>
<dbReference type="InterPro" id="IPR016032">
    <property type="entry name" value="Sig_transdc_resp-reg_C-effctor"/>
</dbReference>
<dbReference type="InterPro" id="IPR011990">
    <property type="entry name" value="TPR-like_helical_dom_sf"/>
</dbReference>
<dbReference type="InterPro" id="IPR041617">
    <property type="entry name" value="TPR_MalT"/>
</dbReference>
<dbReference type="InterPro" id="IPR023768">
    <property type="entry name" value="Tscrpt_reg_HTH_MalT"/>
</dbReference>
<dbReference type="InterPro" id="IPR000792">
    <property type="entry name" value="Tscrpt_reg_LuxR_C"/>
</dbReference>
<dbReference type="InterPro" id="IPR036388">
    <property type="entry name" value="WH-like_DNA-bd_sf"/>
</dbReference>
<dbReference type="NCBIfam" id="NF003420">
    <property type="entry name" value="PRK04841.1"/>
    <property type="match status" value="1"/>
</dbReference>
<dbReference type="PANTHER" id="PTHR44688">
    <property type="entry name" value="DNA-BINDING TRANSCRIPTIONAL ACTIVATOR DEVR_DOSR"/>
    <property type="match status" value="1"/>
</dbReference>
<dbReference type="PANTHER" id="PTHR44688:SF16">
    <property type="entry name" value="DNA-BINDING TRANSCRIPTIONAL ACTIVATOR DEVR_DOSR"/>
    <property type="match status" value="1"/>
</dbReference>
<dbReference type="Pfam" id="PF00196">
    <property type="entry name" value="GerE"/>
    <property type="match status" value="1"/>
</dbReference>
<dbReference type="Pfam" id="PF17874">
    <property type="entry name" value="TPR_MalT"/>
    <property type="match status" value="1"/>
</dbReference>
<dbReference type="PRINTS" id="PR00038">
    <property type="entry name" value="HTHLUXR"/>
</dbReference>
<dbReference type="SMART" id="SM00421">
    <property type="entry name" value="HTH_LUXR"/>
    <property type="match status" value="1"/>
</dbReference>
<dbReference type="SUPFAM" id="SSF46894">
    <property type="entry name" value="C-terminal effector domain of the bipartite response regulators"/>
    <property type="match status" value="1"/>
</dbReference>
<dbReference type="SUPFAM" id="SSF52540">
    <property type="entry name" value="P-loop containing nucleoside triphosphate hydrolases"/>
    <property type="match status" value="1"/>
</dbReference>
<dbReference type="SUPFAM" id="SSF48452">
    <property type="entry name" value="TPR-like"/>
    <property type="match status" value="1"/>
</dbReference>
<dbReference type="PROSITE" id="PS00622">
    <property type="entry name" value="HTH_LUXR_1"/>
    <property type="match status" value="1"/>
</dbReference>
<dbReference type="PROSITE" id="PS50043">
    <property type="entry name" value="HTH_LUXR_2"/>
    <property type="match status" value="1"/>
</dbReference>
<reference key="1">
    <citation type="journal article" date="2006" name="Proc. Natl. Acad. Sci. U.S.A.">
        <title>Identification of genes subject to positive selection in uropathogenic strains of Escherichia coli: a comparative genomics approach.</title>
        <authorList>
            <person name="Chen S.L."/>
            <person name="Hung C.-S."/>
            <person name="Xu J."/>
            <person name="Reigstad C.S."/>
            <person name="Magrini V."/>
            <person name="Sabo A."/>
            <person name="Blasiar D."/>
            <person name="Bieri T."/>
            <person name="Meyer R.R."/>
            <person name="Ozersky P."/>
            <person name="Armstrong J.R."/>
            <person name="Fulton R.S."/>
            <person name="Latreille J.P."/>
            <person name="Spieth J."/>
            <person name="Hooton T.M."/>
            <person name="Mardis E.R."/>
            <person name="Hultgren S.J."/>
            <person name="Gordon J.I."/>
        </authorList>
    </citation>
    <scope>NUCLEOTIDE SEQUENCE [LARGE SCALE GENOMIC DNA]</scope>
    <source>
        <strain>UTI89 / UPEC</strain>
    </source>
</reference>
<accession>Q1R5L6</accession>
<sequence>MLIPSKLSRPVRLDHTVVRERLLAKLSGANNFRLALITSPAGYGKTTLISQWAAGKNDIGWYSLDEGDNQQERFASYLIAAVQQATNGHCAICETMAQKRQYASLTSLFAQLFIELAEWHSPLYLVIDDYHLITNPVIHESMRFFIRHQPENLTLVVLSRNLPQLGIANLRVRDQLLEIGSQQLAFTHQEAKQFFDCRLSSPIEAAESSRICDDVSGWATALQLIALSARQNTHSAHKSARRLAGINASHLSDYLVDEVLDNVDLATRHFLLKSAILRSMNDALITRVTGEENGQMRLEEIERQGLFLQRMDDTGEWFCYHPLFGNFLRQRCQWELAAELPEIHRAAAESWMAQGFPSEAIHHALAAGDALMLRDILLNHAWSLFNHSELSLLEESLKALPWDSLLENPQLVLLQAWLMQSQHRYGEVNTLLARAEHEIKDIREGTMHAEFNALRAQVAINDGNPDEAERLAKLALEELPPGWFYSRIVATSVLGEVLHCKGELTRSLALMQQTEQMARQHDVWHYALWSLIQQSEILFAQGFLQTAWETQEKAFQLINEQHLEQLPMHEFLVRIRAQLLWAWARLDEAEASARSGIEVLSSYQPQQQLQCLAMLIQCSLARGDLDNARSQLNRLENLLGNGKYHSDWISNANKVRVIYWQMTGDKAAAANWLRHTAKPEFANNHFLQGQWRNIARAQILLGEFESAEIVLEELNENARSLRLMSDLNRNLLLLNQLYWQAGRKSDAQRVLLDALKLANRTGFISHFVIEGEAMAQQLRQLIQLNTLPELEQHRAQRILREINQHHRHKFAHFDENFVERLLNHPEVPELIRTSPLTQREWQVLGLIYSGYSNEQIAGELEVAATTIKTHIRNLYQKLGVAHRQAAVQHAQKLLKMMGYGV</sequence>
<protein>
    <recommendedName>
        <fullName evidence="1">HTH-type transcriptional regulator MalT</fullName>
    </recommendedName>
    <alternativeName>
        <fullName evidence="1">ATP-dependent transcriptional activator MalT</fullName>
    </alternativeName>
</protein>
<gene>
    <name evidence="1" type="primary">malT</name>
    <name type="ordered locus">UTI89_C3919</name>
</gene>
<name>MALT_ECOUT</name>
<proteinExistence type="inferred from homology"/>
<comment type="function">
    <text evidence="1">Positively regulates the transcription of the maltose regulon whose gene products are responsible for uptake and catabolism of malto-oligosaccharides. Specifically binds to the promoter region of its target genes, recognizing a short DNA motif called the MalT box.</text>
</comment>
<comment type="activity regulation">
    <text evidence="1">Activated by ATP and maltotriose, which are both required for DNA binding.</text>
</comment>
<comment type="subunit">
    <text evidence="1">Monomer in solution. Oligomerizes to an active state in the presence of the positive effectors ATP and maltotriose.</text>
</comment>
<comment type="similarity">
    <text evidence="1">Belongs to the MalT family.</text>
</comment>